<keyword id="KW-0488">Methylation</keyword>
<keyword id="KW-1185">Reference proteome</keyword>
<keyword id="KW-0687">Ribonucleoprotein</keyword>
<keyword id="KW-0689">Ribosomal protein</keyword>
<keyword id="KW-0694">RNA-binding</keyword>
<keyword id="KW-0699">rRNA-binding</keyword>
<evidence type="ECO:0000255" key="1">
    <source>
        <dbReference type="HAMAP-Rule" id="MF_00736"/>
    </source>
</evidence>
<evidence type="ECO:0000305" key="2"/>
<dbReference type="EMBL" id="CP001071">
    <property type="protein sequence ID" value="ACD04871.1"/>
    <property type="molecule type" value="Genomic_DNA"/>
</dbReference>
<dbReference type="RefSeq" id="WP_012420086.1">
    <property type="nucleotide sequence ID" value="NZ_CP071807.1"/>
</dbReference>
<dbReference type="SMR" id="B2UQY6"/>
<dbReference type="STRING" id="349741.Amuc_1045"/>
<dbReference type="PaxDb" id="349741-Amuc_1045"/>
<dbReference type="GeneID" id="60880513"/>
<dbReference type="KEGG" id="amu:Amuc_1045"/>
<dbReference type="eggNOG" id="COG0080">
    <property type="taxonomic scope" value="Bacteria"/>
</dbReference>
<dbReference type="HOGENOM" id="CLU_074237_2_1_0"/>
<dbReference type="OrthoDB" id="9802408at2"/>
<dbReference type="BioCyc" id="AMUC349741:G1GBX-1116-MONOMER"/>
<dbReference type="Proteomes" id="UP000001031">
    <property type="component" value="Chromosome"/>
</dbReference>
<dbReference type="GO" id="GO:0022625">
    <property type="term" value="C:cytosolic large ribosomal subunit"/>
    <property type="evidence" value="ECO:0007669"/>
    <property type="project" value="TreeGrafter"/>
</dbReference>
<dbReference type="GO" id="GO:0070180">
    <property type="term" value="F:large ribosomal subunit rRNA binding"/>
    <property type="evidence" value="ECO:0007669"/>
    <property type="project" value="UniProtKB-UniRule"/>
</dbReference>
<dbReference type="GO" id="GO:0003735">
    <property type="term" value="F:structural constituent of ribosome"/>
    <property type="evidence" value="ECO:0007669"/>
    <property type="project" value="InterPro"/>
</dbReference>
<dbReference type="GO" id="GO:0006412">
    <property type="term" value="P:translation"/>
    <property type="evidence" value="ECO:0007669"/>
    <property type="project" value="UniProtKB-UniRule"/>
</dbReference>
<dbReference type="CDD" id="cd00349">
    <property type="entry name" value="Ribosomal_L11"/>
    <property type="match status" value="1"/>
</dbReference>
<dbReference type="FunFam" id="1.10.10.250:FF:000001">
    <property type="entry name" value="50S ribosomal protein L11"/>
    <property type="match status" value="1"/>
</dbReference>
<dbReference type="FunFam" id="3.30.1550.10:FF:000001">
    <property type="entry name" value="50S ribosomal protein L11"/>
    <property type="match status" value="1"/>
</dbReference>
<dbReference type="Gene3D" id="1.10.10.250">
    <property type="entry name" value="Ribosomal protein L11, C-terminal domain"/>
    <property type="match status" value="1"/>
</dbReference>
<dbReference type="Gene3D" id="3.30.1550.10">
    <property type="entry name" value="Ribosomal protein L11/L12, N-terminal domain"/>
    <property type="match status" value="1"/>
</dbReference>
<dbReference type="HAMAP" id="MF_00736">
    <property type="entry name" value="Ribosomal_uL11"/>
    <property type="match status" value="1"/>
</dbReference>
<dbReference type="InterPro" id="IPR000911">
    <property type="entry name" value="Ribosomal_uL11"/>
</dbReference>
<dbReference type="InterPro" id="IPR006519">
    <property type="entry name" value="Ribosomal_uL11_bac-typ"/>
</dbReference>
<dbReference type="InterPro" id="IPR020783">
    <property type="entry name" value="Ribosomal_uL11_C"/>
</dbReference>
<dbReference type="InterPro" id="IPR036769">
    <property type="entry name" value="Ribosomal_uL11_C_sf"/>
</dbReference>
<dbReference type="InterPro" id="IPR020784">
    <property type="entry name" value="Ribosomal_uL11_N"/>
</dbReference>
<dbReference type="InterPro" id="IPR036796">
    <property type="entry name" value="Ribosomal_uL11_N_sf"/>
</dbReference>
<dbReference type="NCBIfam" id="TIGR01632">
    <property type="entry name" value="L11_bact"/>
    <property type="match status" value="1"/>
</dbReference>
<dbReference type="PANTHER" id="PTHR11661">
    <property type="entry name" value="60S RIBOSOMAL PROTEIN L12"/>
    <property type="match status" value="1"/>
</dbReference>
<dbReference type="PANTHER" id="PTHR11661:SF1">
    <property type="entry name" value="LARGE RIBOSOMAL SUBUNIT PROTEIN UL11M"/>
    <property type="match status" value="1"/>
</dbReference>
<dbReference type="Pfam" id="PF00298">
    <property type="entry name" value="Ribosomal_L11"/>
    <property type="match status" value="1"/>
</dbReference>
<dbReference type="Pfam" id="PF03946">
    <property type="entry name" value="Ribosomal_L11_N"/>
    <property type="match status" value="1"/>
</dbReference>
<dbReference type="SMART" id="SM00649">
    <property type="entry name" value="RL11"/>
    <property type="match status" value="1"/>
</dbReference>
<dbReference type="SUPFAM" id="SSF54747">
    <property type="entry name" value="Ribosomal L11/L12e N-terminal domain"/>
    <property type="match status" value="1"/>
</dbReference>
<dbReference type="SUPFAM" id="SSF46906">
    <property type="entry name" value="Ribosomal protein L11, C-terminal domain"/>
    <property type="match status" value="1"/>
</dbReference>
<gene>
    <name evidence="1" type="primary">rplK</name>
    <name type="ordered locus">Amuc_1045</name>
</gene>
<comment type="function">
    <text evidence="1">Forms part of the ribosomal stalk which helps the ribosome interact with GTP-bound translation factors.</text>
</comment>
<comment type="subunit">
    <text evidence="1">Part of the ribosomal stalk of the 50S ribosomal subunit. Interacts with L10 and the large rRNA to form the base of the stalk. L10 forms an elongated spine to which L12 dimers bind in a sequential fashion forming a multimeric L10(L12)X complex.</text>
</comment>
<comment type="PTM">
    <text evidence="1">One or more lysine residues are methylated.</text>
</comment>
<comment type="similarity">
    <text evidence="1">Belongs to the universal ribosomal protein uL11 family.</text>
</comment>
<organism>
    <name type="scientific">Akkermansia muciniphila (strain ATCC BAA-835 / DSM 22959 / JCM 33894 / BCRC 81048 / CCUG 64013 / CIP 107961 / Muc)</name>
    <dbReference type="NCBI Taxonomy" id="349741"/>
    <lineage>
        <taxon>Bacteria</taxon>
        <taxon>Pseudomonadati</taxon>
        <taxon>Verrucomicrobiota</taxon>
        <taxon>Verrucomicrobiia</taxon>
        <taxon>Verrucomicrobiales</taxon>
        <taxon>Akkermansiaceae</taxon>
        <taxon>Akkermansia</taxon>
    </lineage>
</organism>
<name>RL11_AKKM8</name>
<reference key="1">
    <citation type="journal article" date="2011" name="PLoS ONE">
        <title>The genome of Akkermansia muciniphila, a dedicated intestinal mucin degrader, and its use in exploring intestinal metagenomes.</title>
        <authorList>
            <person name="van Passel M.W."/>
            <person name="Kant R."/>
            <person name="Zoetendal E.G."/>
            <person name="Plugge C.M."/>
            <person name="Derrien M."/>
            <person name="Malfatti S.A."/>
            <person name="Chain P.S."/>
            <person name="Woyke T."/>
            <person name="Palva A."/>
            <person name="de Vos W.M."/>
            <person name="Smidt H."/>
        </authorList>
    </citation>
    <scope>NUCLEOTIDE SEQUENCE [LARGE SCALE GENOMIC DNA]</scope>
    <source>
        <strain>ATCC BAA-835 / DSM 22959 / JCM 33894 / BCRC 81048 / CCUG 64013 / CIP 107961 / Muc</strain>
    </source>
</reference>
<accession>B2UQY6</accession>
<sequence length="142" mass="14916">MAKEITKIIKLQINAGAANPSPPVGPALGQAGVNIMAFCKEFNAATQKQAGDLLPTVITVYKDKSFSFITKQPPGSVLLKKAAGVASGSGEPNKKKVATLSKAKLMEVVNTKLPDLNTKDPERAARILAGQARQMGIEVEGM</sequence>
<protein>
    <recommendedName>
        <fullName evidence="1">Large ribosomal subunit protein uL11</fullName>
    </recommendedName>
    <alternativeName>
        <fullName evidence="2">50S ribosomal protein L11</fullName>
    </alternativeName>
</protein>
<feature type="chain" id="PRO_1000132855" description="Large ribosomal subunit protein uL11">
    <location>
        <begin position="1"/>
        <end position="142"/>
    </location>
</feature>
<proteinExistence type="inferred from homology"/>